<name>CLPS_XANCP</name>
<sequence>MPRKTSHEHDHGLVVETSKPEVAPPPRYQVLLLNDDYTPMDFVVTVLQQFFNLELERATQVMLHVHTRGRGVCGVYSREVAESKVAQVNEFSRMNQHPLLCTMEQA</sequence>
<proteinExistence type="inferred from homology"/>
<evidence type="ECO:0000255" key="1">
    <source>
        <dbReference type="HAMAP-Rule" id="MF_00302"/>
    </source>
</evidence>
<evidence type="ECO:0000256" key="2">
    <source>
        <dbReference type="SAM" id="MobiDB-lite"/>
    </source>
</evidence>
<accession>Q8P999</accession>
<gene>
    <name evidence="1" type="primary">clpS</name>
    <name type="ordered locus">XCC1966</name>
</gene>
<comment type="function">
    <text evidence="1">Involved in the modulation of the specificity of the ClpAP-mediated ATP-dependent protein degradation.</text>
</comment>
<comment type="subunit">
    <text evidence="1">Binds to the N-terminal domain of the chaperone ClpA.</text>
</comment>
<comment type="similarity">
    <text evidence="1">Belongs to the ClpS family.</text>
</comment>
<reference key="1">
    <citation type="journal article" date="2002" name="Nature">
        <title>Comparison of the genomes of two Xanthomonas pathogens with differing host specificities.</title>
        <authorList>
            <person name="da Silva A.C.R."/>
            <person name="Ferro J.A."/>
            <person name="Reinach F.C."/>
            <person name="Farah C.S."/>
            <person name="Furlan L.R."/>
            <person name="Quaggio R.B."/>
            <person name="Monteiro-Vitorello C.B."/>
            <person name="Van Sluys M.A."/>
            <person name="Almeida N.F. Jr."/>
            <person name="Alves L.M.C."/>
            <person name="do Amaral A.M."/>
            <person name="Bertolini M.C."/>
            <person name="Camargo L.E.A."/>
            <person name="Camarotte G."/>
            <person name="Cannavan F."/>
            <person name="Cardozo J."/>
            <person name="Chambergo F."/>
            <person name="Ciapina L.P."/>
            <person name="Cicarelli R.M.B."/>
            <person name="Coutinho L.L."/>
            <person name="Cursino-Santos J.R."/>
            <person name="El-Dorry H."/>
            <person name="Faria J.B."/>
            <person name="Ferreira A.J.S."/>
            <person name="Ferreira R.C.C."/>
            <person name="Ferro M.I.T."/>
            <person name="Formighieri E.F."/>
            <person name="Franco M.C."/>
            <person name="Greggio C.C."/>
            <person name="Gruber A."/>
            <person name="Katsuyama A.M."/>
            <person name="Kishi L.T."/>
            <person name="Leite R.P."/>
            <person name="Lemos E.G.M."/>
            <person name="Lemos M.V.F."/>
            <person name="Locali E.C."/>
            <person name="Machado M.A."/>
            <person name="Madeira A.M.B.N."/>
            <person name="Martinez-Rossi N.M."/>
            <person name="Martins E.C."/>
            <person name="Meidanis J."/>
            <person name="Menck C.F.M."/>
            <person name="Miyaki C.Y."/>
            <person name="Moon D.H."/>
            <person name="Moreira L.M."/>
            <person name="Novo M.T.M."/>
            <person name="Okura V.K."/>
            <person name="Oliveira M.C."/>
            <person name="Oliveira V.R."/>
            <person name="Pereira H.A."/>
            <person name="Rossi A."/>
            <person name="Sena J.A.D."/>
            <person name="Silva C."/>
            <person name="de Souza R.F."/>
            <person name="Spinola L.A.F."/>
            <person name="Takita M.A."/>
            <person name="Tamura R.E."/>
            <person name="Teixeira E.C."/>
            <person name="Tezza R.I.D."/>
            <person name="Trindade dos Santos M."/>
            <person name="Truffi D."/>
            <person name="Tsai S.M."/>
            <person name="White F.F."/>
            <person name="Setubal J.C."/>
            <person name="Kitajima J.P."/>
        </authorList>
    </citation>
    <scope>NUCLEOTIDE SEQUENCE [LARGE SCALE GENOMIC DNA]</scope>
    <source>
        <strain>ATCC 33913 / DSM 3586 / NCPPB 528 / LMG 568 / P 25</strain>
    </source>
</reference>
<dbReference type="EMBL" id="AE008922">
    <property type="protein sequence ID" value="AAM41255.1"/>
    <property type="molecule type" value="Genomic_DNA"/>
</dbReference>
<dbReference type="RefSeq" id="NP_637331.1">
    <property type="nucleotide sequence ID" value="NC_003902.1"/>
</dbReference>
<dbReference type="RefSeq" id="WP_011037130.1">
    <property type="nucleotide sequence ID" value="NC_003902.1"/>
</dbReference>
<dbReference type="SMR" id="Q8P999"/>
<dbReference type="STRING" id="190485.XCC1966"/>
<dbReference type="EnsemblBacteria" id="AAM41255">
    <property type="protein sequence ID" value="AAM41255"/>
    <property type="gene ID" value="XCC1966"/>
</dbReference>
<dbReference type="KEGG" id="xcc:XCC1966"/>
<dbReference type="PATRIC" id="fig|190485.4.peg.2101"/>
<dbReference type="eggNOG" id="COG2127">
    <property type="taxonomic scope" value="Bacteria"/>
</dbReference>
<dbReference type="HOGENOM" id="CLU_134358_2_1_6"/>
<dbReference type="OrthoDB" id="9796121at2"/>
<dbReference type="PHI-base" id="PHI:12175"/>
<dbReference type="Proteomes" id="UP000001010">
    <property type="component" value="Chromosome"/>
</dbReference>
<dbReference type="GO" id="GO:0030163">
    <property type="term" value="P:protein catabolic process"/>
    <property type="evidence" value="ECO:0007669"/>
    <property type="project" value="InterPro"/>
</dbReference>
<dbReference type="GO" id="GO:0006508">
    <property type="term" value="P:proteolysis"/>
    <property type="evidence" value="ECO:0007669"/>
    <property type="project" value="UniProtKB-UniRule"/>
</dbReference>
<dbReference type="FunFam" id="3.30.1390.10:FF:000002">
    <property type="entry name" value="ATP-dependent Clp protease adapter protein ClpS"/>
    <property type="match status" value="1"/>
</dbReference>
<dbReference type="Gene3D" id="3.30.1390.10">
    <property type="match status" value="1"/>
</dbReference>
<dbReference type="HAMAP" id="MF_00302">
    <property type="entry name" value="ClpS"/>
    <property type="match status" value="1"/>
</dbReference>
<dbReference type="InterPro" id="IPR022935">
    <property type="entry name" value="ClpS"/>
</dbReference>
<dbReference type="InterPro" id="IPR003769">
    <property type="entry name" value="ClpS_core"/>
</dbReference>
<dbReference type="InterPro" id="IPR014719">
    <property type="entry name" value="Ribosomal_bL12_C/ClpS-like"/>
</dbReference>
<dbReference type="NCBIfam" id="NF000669">
    <property type="entry name" value="PRK00033.1-2"/>
    <property type="match status" value="1"/>
</dbReference>
<dbReference type="NCBIfam" id="NF000670">
    <property type="entry name" value="PRK00033.1-3"/>
    <property type="match status" value="1"/>
</dbReference>
<dbReference type="NCBIfam" id="NF000672">
    <property type="entry name" value="PRK00033.1-5"/>
    <property type="match status" value="1"/>
</dbReference>
<dbReference type="PANTHER" id="PTHR33473:SF19">
    <property type="entry name" value="ATP-DEPENDENT CLP PROTEASE ADAPTER PROTEIN CLPS"/>
    <property type="match status" value="1"/>
</dbReference>
<dbReference type="PANTHER" id="PTHR33473">
    <property type="entry name" value="ATP-DEPENDENT CLP PROTEASE ADAPTER PROTEIN CLPS1, CHLOROPLASTIC"/>
    <property type="match status" value="1"/>
</dbReference>
<dbReference type="Pfam" id="PF02617">
    <property type="entry name" value="ClpS"/>
    <property type="match status" value="1"/>
</dbReference>
<dbReference type="SUPFAM" id="SSF54736">
    <property type="entry name" value="ClpS-like"/>
    <property type="match status" value="1"/>
</dbReference>
<protein>
    <recommendedName>
        <fullName evidence="1">ATP-dependent Clp protease adapter protein ClpS</fullName>
    </recommendedName>
</protein>
<feature type="chain" id="PRO_0000215763" description="ATP-dependent Clp protease adapter protein ClpS">
    <location>
        <begin position="1"/>
        <end position="106"/>
    </location>
</feature>
<feature type="region of interest" description="Disordered" evidence="2">
    <location>
        <begin position="1"/>
        <end position="21"/>
    </location>
</feature>
<feature type="compositionally biased region" description="Basic and acidic residues" evidence="2">
    <location>
        <begin position="1"/>
        <end position="13"/>
    </location>
</feature>
<organism>
    <name type="scientific">Xanthomonas campestris pv. campestris (strain ATCC 33913 / DSM 3586 / NCPPB 528 / LMG 568 / P 25)</name>
    <dbReference type="NCBI Taxonomy" id="190485"/>
    <lineage>
        <taxon>Bacteria</taxon>
        <taxon>Pseudomonadati</taxon>
        <taxon>Pseudomonadota</taxon>
        <taxon>Gammaproteobacteria</taxon>
        <taxon>Lysobacterales</taxon>
        <taxon>Lysobacteraceae</taxon>
        <taxon>Xanthomonas</taxon>
    </lineage>
</organism>
<keyword id="KW-1185">Reference proteome</keyword>